<gene>
    <name evidence="6 11" type="primary">Sbat</name>
    <name evidence="7 8" type="synonym">NAA38</name>
    <name evidence="11" type="ORF">CG31950</name>
</gene>
<dbReference type="EMBL" id="AE014134">
    <property type="protein sequence ID" value="AAN10396.1"/>
    <property type="molecule type" value="Genomic_DNA"/>
</dbReference>
<dbReference type="EMBL" id="AE014134">
    <property type="protein sequence ID" value="AGB92508.1"/>
    <property type="molecule type" value="Genomic_DNA"/>
</dbReference>
<dbReference type="EMBL" id="BT044300">
    <property type="protein sequence ID" value="ACH92365.1"/>
    <property type="molecule type" value="mRNA"/>
</dbReference>
<dbReference type="EMBL" id="BT022486">
    <property type="protein sequence ID" value="AAY54902.1"/>
    <property type="molecule type" value="mRNA"/>
</dbReference>
<dbReference type="EMBL" id="KX531912">
    <property type="protein sequence ID" value="ANY27722.1"/>
    <property type="molecule type" value="mRNA"/>
</dbReference>
<dbReference type="RefSeq" id="NP_001259971.1">
    <property type="nucleotide sequence ID" value="NM_001273042.1"/>
</dbReference>
<dbReference type="RefSeq" id="NP_722859.1">
    <property type="nucleotide sequence ID" value="NM_164512.2"/>
</dbReference>
<dbReference type="SMR" id="Q8IPZ7"/>
<dbReference type="ComplexPortal" id="CPX-7943">
    <property type="entry name" value="NatC N-alpha-acetyltransferase complex"/>
</dbReference>
<dbReference type="ComplexPortal" id="CPX-7961">
    <property type="entry name" value="NatC N-alpha-acetyltransferase complex, testis-specific variant"/>
</dbReference>
<dbReference type="FunCoup" id="Q8IPZ7">
    <property type="interactions" value="529"/>
</dbReference>
<dbReference type="IntAct" id="Q8IPZ7">
    <property type="interactions" value="3"/>
</dbReference>
<dbReference type="STRING" id="7227.FBpp0304730"/>
<dbReference type="PaxDb" id="7227-FBpp0304730"/>
<dbReference type="DNASU" id="319043"/>
<dbReference type="EnsemblMetazoa" id="FBtr0077630">
    <property type="protein sequence ID" value="FBpp0077315"/>
    <property type="gene ID" value="FBgn0051950"/>
</dbReference>
<dbReference type="EnsemblMetazoa" id="FBtr0332457">
    <property type="protein sequence ID" value="FBpp0304730"/>
    <property type="gene ID" value="FBgn0051950"/>
</dbReference>
<dbReference type="GeneID" id="319043"/>
<dbReference type="KEGG" id="dme:Dmel_CG31950"/>
<dbReference type="UCSC" id="CG31950-RA">
    <property type="organism name" value="d. melanogaster"/>
</dbReference>
<dbReference type="AGR" id="FB:FBgn0051950"/>
<dbReference type="CTD" id="319043"/>
<dbReference type="FlyBase" id="FBgn0051950">
    <property type="gene designation" value="Sbat"/>
</dbReference>
<dbReference type="VEuPathDB" id="VectorBase:FBgn0051950"/>
<dbReference type="eggNOG" id="KOG3168">
    <property type="taxonomic scope" value="Eukaryota"/>
</dbReference>
<dbReference type="GeneTree" id="ENSGT00390000018418"/>
<dbReference type="HOGENOM" id="CLU_2017573_0_0_1"/>
<dbReference type="InParanoid" id="Q8IPZ7"/>
<dbReference type="OMA" id="PHQMNDP"/>
<dbReference type="OrthoDB" id="368909at2759"/>
<dbReference type="BioGRID-ORCS" id="319043">
    <property type="hits" value="0 hits in 1 CRISPR screen"/>
</dbReference>
<dbReference type="GenomeRNAi" id="319043"/>
<dbReference type="Proteomes" id="UP000000803">
    <property type="component" value="Chromosome 2L"/>
</dbReference>
<dbReference type="Bgee" id="FBgn0051950">
    <property type="expression patterns" value="Expressed in mid-late elongation-stage spermatid (Drosophila) in testis and 65 other cell types or tissues"/>
</dbReference>
<dbReference type="ExpressionAtlas" id="Q8IPZ7">
    <property type="expression patterns" value="baseline and differential"/>
</dbReference>
<dbReference type="GO" id="GO:0031417">
    <property type="term" value="C:NatC complex"/>
    <property type="evidence" value="ECO:0000314"/>
    <property type="project" value="UniProtKB"/>
</dbReference>
<dbReference type="GO" id="GO:0005634">
    <property type="term" value="C:nucleus"/>
    <property type="evidence" value="ECO:0007669"/>
    <property type="project" value="UniProtKB-SubCell"/>
</dbReference>
<dbReference type="GO" id="GO:0003723">
    <property type="term" value="F:RNA binding"/>
    <property type="evidence" value="ECO:0007669"/>
    <property type="project" value="InterPro"/>
</dbReference>
<dbReference type="CDD" id="cd06168">
    <property type="entry name" value="LSMD1"/>
    <property type="match status" value="1"/>
</dbReference>
<dbReference type="Gene3D" id="2.30.30.100">
    <property type="match status" value="1"/>
</dbReference>
<dbReference type="InterPro" id="IPR010920">
    <property type="entry name" value="LSM_dom_sf"/>
</dbReference>
<dbReference type="InterPro" id="IPR034110">
    <property type="entry name" value="LSMD1_Sm"/>
</dbReference>
<dbReference type="InterPro" id="IPR047575">
    <property type="entry name" value="Sm"/>
</dbReference>
<dbReference type="InterPro" id="IPR001163">
    <property type="entry name" value="Sm_dom_euk/arc"/>
</dbReference>
<dbReference type="InterPro" id="IPR050914">
    <property type="entry name" value="snRNP_SmB/NAA38-like"/>
</dbReference>
<dbReference type="PANTHER" id="PTHR10701:SF5">
    <property type="entry name" value="N-ALPHA-ACETYLTRANSFERASE 38, NATC AUXILIARY SUBUNIT"/>
    <property type="match status" value="1"/>
</dbReference>
<dbReference type="PANTHER" id="PTHR10701">
    <property type="entry name" value="SMALL NUCLEAR RIBONUCLEOPROTEIN-ASSOCIATED PROTEIN B AND N"/>
    <property type="match status" value="1"/>
</dbReference>
<dbReference type="Pfam" id="PF01423">
    <property type="entry name" value="LSM"/>
    <property type="match status" value="1"/>
</dbReference>
<dbReference type="SMART" id="SM00651">
    <property type="entry name" value="Sm"/>
    <property type="match status" value="1"/>
</dbReference>
<dbReference type="SUPFAM" id="SSF50182">
    <property type="entry name" value="Sm-like ribonucleoproteins"/>
    <property type="match status" value="1"/>
</dbReference>
<dbReference type="PROSITE" id="PS52002">
    <property type="entry name" value="SM"/>
    <property type="match status" value="1"/>
</dbReference>
<organism evidence="12">
    <name type="scientific">Drosophila melanogaster</name>
    <name type="common">Fruit fly</name>
    <dbReference type="NCBI Taxonomy" id="7227"/>
    <lineage>
        <taxon>Eukaryota</taxon>
        <taxon>Metazoa</taxon>
        <taxon>Ecdysozoa</taxon>
        <taxon>Arthropoda</taxon>
        <taxon>Hexapoda</taxon>
        <taxon>Insecta</taxon>
        <taxon>Pterygota</taxon>
        <taxon>Neoptera</taxon>
        <taxon>Endopterygota</taxon>
        <taxon>Diptera</taxon>
        <taxon>Brachycera</taxon>
        <taxon>Muscomorpha</taxon>
        <taxon>Ephydroidea</taxon>
        <taxon>Drosophilidae</taxon>
        <taxon>Drosophila</taxon>
        <taxon>Sophophora</taxon>
    </lineage>
</organism>
<name>NAA38_DROME</name>
<keyword id="KW-0963">Cytoplasm</keyword>
<keyword id="KW-0539">Nucleus</keyword>
<keyword id="KW-1185">Reference proteome</keyword>
<proteinExistence type="evidence at protein level"/>
<protein>
    <recommendedName>
        <fullName evidence="9">N-alpha-acetyltransferase 38, NatC auxiliary subunit</fullName>
    </recommendedName>
    <alternativeName>
        <fullName evidence="6 11">Protein Sabbat</fullName>
    </alternativeName>
</protein>
<reference key="1">
    <citation type="journal article" date="2000" name="Science">
        <title>The genome sequence of Drosophila melanogaster.</title>
        <authorList>
            <person name="Adams M.D."/>
            <person name="Celniker S.E."/>
            <person name="Holt R.A."/>
            <person name="Evans C.A."/>
            <person name="Gocayne J.D."/>
            <person name="Amanatides P.G."/>
            <person name="Scherer S.E."/>
            <person name="Li P.W."/>
            <person name="Hoskins R.A."/>
            <person name="Galle R.F."/>
            <person name="George R.A."/>
            <person name="Lewis S.E."/>
            <person name="Richards S."/>
            <person name="Ashburner M."/>
            <person name="Henderson S.N."/>
            <person name="Sutton G.G."/>
            <person name="Wortman J.R."/>
            <person name="Yandell M.D."/>
            <person name="Zhang Q."/>
            <person name="Chen L.X."/>
            <person name="Brandon R.C."/>
            <person name="Rogers Y.-H.C."/>
            <person name="Blazej R.G."/>
            <person name="Champe M."/>
            <person name="Pfeiffer B.D."/>
            <person name="Wan K.H."/>
            <person name="Doyle C."/>
            <person name="Baxter E.G."/>
            <person name="Helt G."/>
            <person name="Nelson C.R."/>
            <person name="Miklos G.L.G."/>
            <person name="Abril J.F."/>
            <person name="Agbayani A."/>
            <person name="An H.-J."/>
            <person name="Andrews-Pfannkoch C."/>
            <person name="Baldwin D."/>
            <person name="Ballew R.M."/>
            <person name="Basu A."/>
            <person name="Baxendale J."/>
            <person name="Bayraktaroglu L."/>
            <person name="Beasley E.M."/>
            <person name="Beeson K.Y."/>
            <person name="Benos P.V."/>
            <person name="Berman B.P."/>
            <person name="Bhandari D."/>
            <person name="Bolshakov S."/>
            <person name="Borkova D."/>
            <person name="Botchan M.R."/>
            <person name="Bouck J."/>
            <person name="Brokstein P."/>
            <person name="Brottier P."/>
            <person name="Burtis K.C."/>
            <person name="Busam D.A."/>
            <person name="Butler H."/>
            <person name="Cadieu E."/>
            <person name="Center A."/>
            <person name="Chandra I."/>
            <person name="Cherry J.M."/>
            <person name="Cawley S."/>
            <person name="Dahlke C."/>
            <person name="Davenport L.B."/>
            <person name="Davies P."/>
            <person name="de Pablos B."/>
            <person name="Delcher A."/>
            <person name="Deng Z."/>
            <person name="Mays A.D."/>
            <person name="Dew I."/>
            <person name="Dietz S.M."/>
            <person name="Dodson K."/>
            <person name="Doup L.E."/>
            <person name="Downes M."/>
            <person name="Dugan-Rocha S."/>
            <person name="Dunkov B.C."/>
            <person name="Dunn P."/>
            <person name="Durbin K.J."/>
            <person name="Evangelista C.C."/>
            <person name="Ferraz C."/>
            <person name="Ferriera S."/>
            <person name="Fleischmann W."/>
            <person name="Fosler C."/>
            <person name="Gabrielian A.E."/>
            <person name="Garg N.S."/>
            <person name="Gelbart W.M."/>
            <person name="Glasser K."/>
            <person name="Glodek A."/>
            <person name="Gong F."/>
            <person name="Gorrell J.H."/>
            <person name="Gu Z."/>
            <person name="Guan P."/>
            <person name="Harris M."/>
            <person name="Harris N.L."/>
            <person name="Harvey D.A."/>
            <person name="Heiman T.J."/>
            <person name="Hernandez J.R."/>
            <person name="Houck J."/>
            <person name="Hostin D."/>
            <person name="Houston K.A."/>
            <person name="Howland T.J."/>
            <person name="Wei M.-H."/>
            <person name="Ibegwam C."/>
            <person name="Jalali M."/>
            <person name="Kalush F."/>
            <person name="Karpen G.H."/>
            <person name="Ke Z."/>
            <person name="Kennison J.A."/>
            <person name="Ketchum K.A."/>
            <person name="Kimmel B.E."/>
            <person name="Kodira C.D."/>
            <person name="Kraft C.L."/>
            <person name="Kravitz S."/>
            <person name="Kulp D."/>
            <person name="Lai Z."/>
            <person name="Lasko P."/>
            <person name="Lei Y."/>
            <person name="Levitsky A.A."/>
            <person name="Li J.H."/>
            <person name="Li Z."/>
            <person name="Liang Y."/>
            <person name="Lin X."/>
            <person name="Liu X."/>
            <person name="Mattei B."/>
            <person name="McIntosh T.C."/>
            <person name="McLeod M.P."/>
            <person name="McPherson D."/>
            <person name="Merkulov G."/>
            <person name="Milshina N.V."/>
            <person name="Mobarry C."/>
            <person name="Morris J."/>
            <person name="Moshrefi A."/>
            <person name="Mount S.M."/>
            <person name="Moy M."/>
            <person name="Murphy B."/>
            <person name="Murphy L."/>
            <person name="Muzny D.M."/>
            <person name="Nelson D.L."/>
            <person name="Nelson D.R."/>
            <person name="Nelson K.A."/>
            <person name="Nixon K."/>
            <person name="Nusskern D.R."/>
            <person name="Pacleb J.M."/>
            <person name="Palazzolo M."/>
            <person name="Pittman G.S."/>
            <person name="Pan S."/>
            <person name="Pollard J."/>
            <person name="Puri V."/>
            <person name="Reese M.G."/>
            <person name="Reinert K."/>
            <person name="Remington K."/>
            <person name="Saunders R.D.C."/>
            <person name="Scheeler F."/>
            <person name="Shen H."/>
            <person name="Shue B.C."/>
            <person name="Siden-Kiamos I."/>
            <person name="Simpson M."/>
            <person name="Skupski M.P."/>
            <person name="Smith T.J."/>
            <person name="Spier E."/>
            <person name="Spradling A.C."/>
            <person name="Stapleton M."/>
            <person name="Strong R."/>
            <person name="Sun E."/>
            <person name="Svirskas R."/>
            <person name="Tector C."/>
            <person name="Turner R."/>
            <person name="Venter E."/>
            <person name="Wang A.H."/>
            <person name="Wang X."/>
            <person name="Wang Z.-Y."/>
            <person name="Wassarman D.A."/>
            <person name="Weinstock G.M."/>
            <person name="Weissenbach J."/>
            <person name="Williams S.M."/>
            <person name="Woodage T."/>
            <person name="Worley K.C."/>
            <person name="Wu D."/>
            <person name="Yang S."/>
            <person name="Yao Q.A."/>
            <person name="Ye J."/>
            <person name="Yeh R.-F."/>
            <person name="Zaveri J.S."/>
            <person name="Zhan M."/>
            <person name="Zhang G."/>
            <person name="Zhao Q."/>
            <person name="Zheng L."/>
            <person name="Zheng X.H."/>
            <person name="Zhong F.N."/>
            <person name="Zhong W."/>
            <person name="Zhou X."/>
            <person name="Zhu S.C."/>
            <person name="Zhu X."/>
            <person name="Smith H.O."/>
            <person name="Gibbs R.A."/>
            <person name="Myers E.W."/>
            <person name="Rubin G.M."/>
            <person name="Venter J.C."/>
        </authorList>
    </citation>
    <scope>NUCLEOTIDE SEQUENCE [LARGE SCALE GENOMIC DNA]</scope>
    <source>
        <strain>Berkeley</strain>
    </source>
</reference>
<reference key="2">
    <citation type="journal article" date="2002" name="Genome Biol.">
        <title>Annotation of the Drosophila melanogaster euchromatic genome: a systematic review.</title>
        <authorList>
            <person name="Misra S."/>
            <person name="Crosby M.A."/>
            <person name="Mungall C.J."/>
            <person name="Matthews B.B."/>
            <person name="Campbell K.S."/>
            <person name="Hradecky P."/>
            <person name="Huang Y."/>
            <person name="Kaminker J.S."/>
            <person name="Millburn G.H."/>
            <person name="Prochnik S.E."/>
            <person name="Smith C.D."/>
            <person name="Tupy J.L."/>
            <person name="Whitfield E.J."/>
            <person name="Bayraktaroglu L."/>
            <person name="Berman B.P."/>
            <person name="Bettencourt B.R."/>
            <person name="Celniker S.E."/>
            <person name="de Grey A.D.N.J."/>
            <person name="Drysdale R.A."/>
            <person name="Harris N.L."/>
            <person name="Richter J."/>
            <person name="Russo S."/>
            <person name="Schroeder A.J."/>
            <person name="Shu S.Q."/>
            <person name="Stapleton M."/>
            <person name="Yamada C."/>
            <person name="Ashburner M."/>
            <person name="Gelbart W.M."/>
            <person name="Rubin G.M."/>
            <person name="Lewis S.E."/>
        </authorList>
    </citation>
    <scope>GENOME REANNOTATION</scope>
    <source>
        <strain>Berkeley</strain>
    </source>
</reference>
<reference key="3">
    <citation type="submission" date="2005-05" db="EMBL/GenBank/DDBJ databases">
        <authorList>
            <person name="Stapleton M."/>
            <person name="Carlson J."/>
            <person name="Chavez C."/>
            <person name="Frise E."/>
            <person name="George R."/>
            <person name="Pacleb J."/>
            <person name="Park S."/>
            <person name="Wan K."/>
            <person name="Yu C."/>
            <person name="Celniker S."/>
        </authorList>
    </citation>
    <scope>NUCLEOTIDE SEQUENCE [LARGE SCALE MRNA]</scope>
</reference>
<reference key="4">
    <citation type="journal article" date="2017" name="FEBS Lett.">
        <title>Novel interactors of the Drosophila Survival Motor Neuron (SMN) Complex suggest its full conservation.</title>
        <authorList>
            <person name="Lanfranco M."/>
            <person name="Cacciottolo R."/>
            <person name="Borg R.M."/>
            <person name="Vassallo N."/>
            <person name="Juge F."/>
            <person name="Bordonne R."/>
            <person name="Cauchi R.J."/>
        </authorList>
    </citation>
    <scope>FUNCTION</scope>
    <scope>INTERACTION WITH SMN AND HEZ</scope>
    <scope>NOMENCLATURE</scope>
</reference>
<reference key="5">
    <citation type="journal article" date="2019" name="G3 (Bethesda)">
        <title>Composition of the Survival Motor Neuron (SMN) Complex in Drosophila melanogaster.</title>
        <authorList>
            <person name="Matera A.G."/>
            <person name="Raimer A.C."/>
            <person name="Schmidt C.A."/>
            <person name="Kelly J.A."/>
            <person name="Droby G.N."/>
            <person name="Baillat D."/>
            <person name="Ten Have S."/>
            <person name="Lamond A.I."/>
            <person name="Wagner E.J."/>
            <person name="Gray K.M."/>
        </authorList>
    </citation>
    <scope>FUNCTION</scope>
    <scope>SIMILARITY WITH NAA38</scope>
    <scope>NOMENCLATURE</scope>
</reference>
<reference key="6">
    <citation type="journal article" date="2023" name="Nat. Commun.">
        <title>N-terminal acetylation shields proteins from degradation and promotes age-dependent motility and longevity.</title>
        <authorList>
            <person name="Varland S."/>
            <person name="Silva R.D."/>
            <person name="Kjosaas I."/>
            <person name="Faustino A."/>
            <person name="Bogaert A."/>
            <person name="Billmann M."/>
            <person name="Boukhatmi H."/>
            <person name="Kellen B."/>
            <person name="Costanzo M."/>
            <person name="Drazic A."/>
            <person name="Osberg C."/>
            <person name="Chan K."/>
            <person name="Zhang X."/>
            <person name="Tong A.H.Y."/>
            <person name="Andreazza S."/>
            <person name="Lee J.J."/>
            <person name="Nedyalkova L."/>
            <person name="Usaj M."/>
            <person name="Whitworth A.J."/>
            <person name="Andrews B.J."/>
            <person name="Moffat J."/>
            <person name="Myers C.L."/>
            <person name="Gevaert K."/>
            <person name="Boone C."/>
            <person name="Martinho R.G."/>
            <person name="Arnesen T."/>
        </authorList>
    </citation>
    <scope>IDENTIFICATION IN THE NATC COMPLEX</scope>
</reference>
<comment type="function">
    <text evidence="1 3 4">Auxiliary component of the N-terminal acetyltransferase C (NatC) complex which catalyzes acetylation of N-terminal methionine residues (By similarity). May have an accessory function in the survival motor neuron (SMN) complex (PubMed:28949413, PubMed:30563832).</text>
</comment>
<comment type="subunit">
    <text evidence="3 5">Component of the N-terminal acetyltransferase C (NatC) complex, which is composed of Naa35, Sbat/Naa38 and Naa30A (PubMed:37891180). Interacts with Smn and Hez; along with Hez and Vlet, may form an accessory subcomplex involved in SMN complex function (PubMed:28949413).</text>
</comment>
<comment type="subcellular location">
    <subcellularLocation>
        <location evidence="1">Cytoplasm</location>
    </subcellularLocation>
    <subcellularLocation>
        <location evidence="1">Nucleus</location>
    </subcellularLocation>
</comment>
<comment type="miscellaneous">
    <text evidence="6">When it was originally identified as the potential ortholog of GEMIN7 this protein was named 'Sabbat' after the 7th day of the week.</text>
</comment>
<comment type="similarity">
    <text evidence="9">Belongs to the snRNP Sm proteins family.</text>
</comment>
<comment type="caution">
    <text evidence="3 4 10">Hez, Sbat and Vlet were originally identified as orthologs of GEMIN6, GEMIN7 and GEMIN8 respectively, which in other organisms forms an accessory subcomplex of the SMN complex (PubMed:28949413). They were subsequently shown to be more closely related to LSM12, NAA38 and COMMD10 (PubMed:30563832). No GEMIN6, GEMIN7 or GEMIN8 orthologs have been identified in Dipteran organisms but it is possible that Hez, Sbat and Vlet have been co-opted to fulfill some of their function in the SMN complex.</text>
</comment>
<sequence>MTELSITGQQVMPPPACTPPEPFRITTNAPHQMNDASLTPGRRKLQKWLGRVLRIVITDGRVLVGFFNCTDRDANIVLSMCAEYLVEGQEPRLLGNVMVPGQHIVSLSIDEPDPQSSLLVQ</sequence>
<evidence type="ECO:0000250" key="1">
    <source>
        <dbReference type="UniProtKB" id="Q9BRA0"/>
    </source>
</evidence>
<evidence type="ECO:0000255" key="2">
    <source>
        <dbReference type="PROSITE-ProRule" id="PRU01346"/>
    </source>
</evidence>
<evidence type="ECO:0000269" key="3">
    <source>
    </source>
</evidence>
<evidence type="ECO:0000269" key="4">
    <source>
    </source>
</evidence>
<evidence type="ECO:0000269" key="5">
    <source>
    </source>
</evidence>
<evidence type="ECO:0000303" key="6">
    <source>
    </source>
</evidence>
<evidence type="ECO:0000303" key="7">
    <source>
    </source>
</evidence>
<evidence type="ECO:0000303" key="8">
    <source>
    </source>
</evidence>
<evidence type="ECO:0000305" key="9"/>
<evidence type="ECO:0000305" key="10">
    <source>
    </source>
</evidence>
<evidence type="ECO:0000312" key="11">
    <source>
        <dbReference type="FlyBase" id="FBgn0051950"/>
    </source>
</evidence>
<evidence type="ECO:0000312" key="12">
    <source>
        <dbReference type="Proteomes" id="UP000000803"/>
    </source>
</evidence>
<accession>Q8IPZ7</accession>
<accession>Q4V620</accession>
<feature type="chain" id="PRO_0000460602" description="N-alpha-acetyltransferase 38, NatC auxiliary subunit">
    <location>
        <begin position="1"/>
        <end position="121"/>
    </location>
</feature>
<feature type="domain" description="Sm" evidence="2">
    <location>
        <begin position="40"/>
        <end position="113"/>
    </location>
</feature>
<feature type="sequence conflict" description="In Ref. 3; AAY54902." evidence="9" ref="3">
    <original>P</original>
    <variation>A</variation>
    <location>
        <position position="15"/>
    </location>
</feature>